<reference key="1">
    <citation type="journal article" date="2001" name="Nature">
        <title>Complete genome sequence of a multiple drug resistant Salmonella enterica serovar Typhi CT18.</title>
        <authorList>
            <person name="Parkhill J."/>
            <person name="Dougan G."/>
            <person name="James K.D."/>
            <person name="Thomson N.R."/>
            <person name="Pickard D."/>
            <person name="Wain J."/>
            <person name="Churcher C.M."/>
            <person name="Mungall K.L."/>
            <person name="Bentley S.D."/>
            <person name="Holden M.T.G."/>
            <person name="Sebaihia M."/>
            <person name="Baker S."/>
            <person name="Basham D."/>
            <person name="Brooks K."/>
            <person name="Chillingworth T."/>
            <person name="Connerton P."/>
            <person name="Cronin A."/>
            <person name="Davis P."/>
            <person name="Davies R.M."/>
            <person name="Dowd L."/>
            <person name="White N."/>
            <person name="Farrar J."/>
            <person name="Feltwell T."/>
            <person name="Hamlin N."/>
            <person name="Haque A."/>
            <person name="Hien T.T."/>
            <person name="Holroyd S."/>
            <person name="Jagels K."/>
            <person name="Krogh A."/>
            <person name="Larsen T.S."/>
            <person name="Leather S."/>
            <person name="Moule S."/>
            <person name="O'Gaora P."/>
            <person name="Parry C."/>
            <person name="Quail M.A."/>
            <person name="Rutherford K.M."/>
            <person name="Simmonds M."/>
            <person name="Skelton J."/>
            <person name="Stevens K."/>
            <person name="Whitehead S."/>
            <person name="Barrell B.G."/>
        </authorList>
    </citation>
    <scope>NUCLEOTIDE SEQUENCE [LARGE SCALE GENOMIC DNA]</scope>
    <source>
        <strain>CT18</strain>
    </source>
</reference>
<reference key="2">
    <citation type="journal article" date="2003" name="J. Bacteriol.">
        <title>Comparative genomics of Salmonella enterica serovar Typhi strains Ty2 and CT18.</title>
        <authorList>
            <person name="Deng W."/>
            <person name="Liou S.-R."/>
            <person name="Plunkett G. III"/>
            <person name="Mayhew G.F."/>
            <person name="Rose D.J."/>
            <person name="Burland V."/>
            <person name="Kodoyianni V."/>
            <person name="Schwartz D.C."/>
            <person name="Blattner F.R."/>
        </authorList>
    </citation>
    <scope>NUCLEOTIDE SEQUENCE [LARGE SCALE GENOMIC DNA]</scope>
    <source>
        <strain>ATCC 700931 / Ty2</strain>
    </source>
</reference>
<organism>
    <name type="scientific">Salmonella typhi</name>
    <dbReference type="NCBI Taxonomy" id="90370"/>
    <lineage>
        <taxon>Bacteria</taxon>
        <taxon>Pseudomonadati</taxon>
        <taxon>Pseudomonadota</taxon>
        <taxon>Gammaproteobacteria</taxon>
        <taxon>Enterobacterales</taxon>
        <taxon>Enterobacteriaceae</taxon>
        <taxon>Salmonella</taxon>
    </lineage>
</organism>
<name>TRPA_SALTI</name>
<sequence>MERYENLFAQLNDRREGAFVPFVTLGDPGIEQSLKIIDTLIDAGADALELGVPFSDPLADGPTIQNANLRAFAAGVTPAQCFEMLALIREKHPTIPIGLLMYANLVFNNGIDAFYARCEQVGVDSVLVADVPVEESAPFRQAALRHNIAPIFICPPNADDDLLRQVASYGRGYTYLLSRSGVTGAENRGALPLHHLIEKLKEYHAAPALQGFGISSPEQVSAAVRAGAAGAISGSAIVKIIEKNLASPEQMLAELRSFVSAMKAASRA</sequence>
<gene>
    <name evidence="1" type="primary">trpA</name>
    <name type="ordered locus">STY1324</name>
    <name type="ordered locus">t1639</name>
</gene>
<keyword id="KW-0028">Amino-acid biosynthesis</keyword>
<keyword id="KW-0057">Aromatic amino acid biosynthesis</keyword>
<keyword id="KW-0456">Lyase</keyword>
<keyword id="KW-0822">Tryptophan biosynthesis</keyword>
<proteinExistence type="inferred from homology"/>
<feature type="chain" id="PRO_0000098838" description="Tryptophan synthase alpha chain">
    <location>
        <begin position="1"/>
        <end position="268"/>
    </location>
</feature>
<feature type="active site" description="Proton acceptor" evidence="1">
    <location>
        <position position="49"/>
    </location>
</feature>
<feature type="active site" description="Proton acceptor" evidence="1">
    <location>
        <position position="60"/>
    </location>
</feature>
<accession>Q8Z7E0</accession>
<comment type="function">
    <text evidence="1">The alpha subunit is responsible for the aldol cleavage of indoleglycerol phosphate to indole and glyceraldehyde 3-phosphate.</text>
</comment>
<comment type="catalytic activity">
    <reaction evidence="1">
        <text>(1S,2R)-1-C-(indol-3-yl)glycerol 3-phosphate + L-serine = D-glyceraldehyde 3-phosphate + L-tryptophan + H2O</text>
        <dbReference type="Rhea" id="RHEA:10532"/>
        <dbReference type="ChEBI" id="CHEBI:15377"/>
        <dbReference type="ChEBI" id="CHEBI:33384"/>
        <dbReference type="ChEBI" id="CHEBI:57912"/>
        <dbReference type="ChEBI" id="CHEBI:58866"/>
        <dbReference type="ChEBI" id="CHEBI:59776"/>
        <dbReference type="EC" id="4.2.1.20"/>
    </reaction>
</comment>
<comment type="pathway">
    <text evidence="1">Amino-acid biosynthesis; L-tryptophan biosynthesis; L-tryptophan from chorismate: step 5/5.</text>
</comment>
<comment type="subunit">
    <text evidence="1">Tetramer of two alpha and two beta chains.</text>
</comment>
<comment type="similarity">
    <text evidence="1">Belongs to the TrpA family.</text>
</comment>
<evidence type="ECO:0000255" key="1">
    <source>
        <dbReference type="HAMAP-Rule" id="MF_00131"/>
    </source>
</evidence>
<dbReference type="EC" id="4.2.1.20" evidence="1"/>
<dbReference type="EMBL" id="AL513382">
    <property type="protein sequence ID" value="CAD08405.1"/>
    <property type="molecule type" value="Genomic_DNA"/>
</dbReference>
<dbReference type="EMBL" id="AE014613">
    <property type="protein sequence ID" value="AAO69266.1"/>
    <property type="molecule type" value="Genomic_DNA"/>
</dbReference>
<dbReference type="RefSeq" id="NP_455771.1">
    <property type="nucleotide sequence ID" value="NC_003198.1"/>
</dbReference>
<dbReference type="RefSeq" id="WP_000443029.1">
    <property type="nucleotide sequence ID" value="NZ_WSUR01000006.1"/>
</dbReference>
<dbReference type="SMR" id="Q8Z7E0"/>
<dbReference type="STRING" id="220341.gene:17585285"/>
<dbReference type="KEGG" id="stt:t1639"/>
<dbReference type="KEGG" id="sty:STY1324"/>
<dbReference type="PATRIC" id="fig|220341.7.peg.1331"/>
<dbReference type="eggNOG" id="COG0159">
    <property type="taxonomic scope" value="Bacteria"/>
</dbReference>
<dbReference type="HOGENOM" id="CLU_016734_0_4_6"/>
<dbReference type="OMA" id="LVMTYWN"/>
<dbReference type="OrthoDB" id="9804578at2"/>
<dbReference type="UniPathway" id="UPA00035">
    <property type="reaction ID" value="UER00044"/>
</dbReference>
<dbReference type="Proteomes" id="UP000000541">
    <property type="component" value="Chromosome"/>
</dbReference>
<dbReference type="Proteomes" id="UP000002670">
    <property type="component" value="Chromosome"/>
</dbReference>
<dbReference type="GO" id="GO:0005829">
    <property type="term" value="C:cytosol"/>
    <property type="evidence" value="ECO:0007669"/>
    <property type="project" value="TreeGrafter"/>
</dbReference>
<dbReference type="GO" id="GO:0004834">
    <property type="term" value="F:tryptophan synthase activity"/>
    <property type="evidence" value="ECO:0007669"/>
    <property type="project" value="UniProtKB-UniRule"/>
</dbReference>
<dbReference type="CDD" id="cd04724">
    <property type="entry name" value="Tryptophan_synthase_alpha"/>
    <property type="match status" value="1"/>
</dbReference>
<dbReference type="FunFam" id="3.20.20.70:FF:000037">
    <property type="entry name" value="Tryptophan synthase alpha chain"/>
    <property type="match status" value="1"/>
</dbReference>
<dbReference type="Gene3D" id="3.20.20.70">
    <property type="entry name" value="Aldolase class I"/>
    <property type="match status" value="1"/>
</dbReference>
<dbReference type="HAMAP" id="MF_00131">
    <property type="entry name" value="Trp_synth_alpha"/>
    <property type="match status" value="1"/>
</dbReference>
<dbReference type="InterPro" id="IPR013785">
    <property type="entry name" value="Aldolase_TIM"/>
</dbReference>
<dbReference type="InterPro" id="IPR011060">
    <property type="entry name" value="RibuloseP-bd_barrel"/>
</dbReference>
<dbReference type="InterPro" id="IPR018204">
    <property type="entry name" value="Trp_synthase_alpha_AS"/>
</dbReference>
<dbReference type="InterPro" id="IPR002028">
    <property type="entry name" value="Trp_synthase_suA"/>
</dbReference>
<dbReference type="NCBIfam" id="TIGR00262">
    <property type="entry name" value="trpA"/>
    <property type="match status" value="1"/>
</dbReference>
<dbReference type="PANTHER" id="PTHR43406:SF1">
    <property type="entry name" value="TRYPTOPHAN SYNTHASE ALPHA CHAIN, CHLOROPLASTIC"/>
    <property type="match status" value="1"/>
</dbReference>
<dbReference type="PANTHER" id="PTHR43406">
    <property type="entry name" value="TRYPTOPHAN SYNTHASE, ALPHA CHAIN"/>
    <property type="match status" value="1"/>
</dbReference>
<dbReference type="Pfam" id="PF00290">
    <property type="entry name" value="Trp_syntA"/>
    <property type="match status" value="1"/>
</dbReference>
<dbReference type="SUPFAM" id="SSF51366">
    <property type="entry name" value="Ribulose-phoshate binding barrel"/>
    <property type="match status" value="1"/>
</dbReference>
<dbReference type="PROSITE" id="PS00167">
    <property type="entry name" value="TRP_SYNTHASE_ALPHA"/>
    <property type="match status" value="1"/>
</dbReference>
<protein>
    <recommendedName>
        <fullName evidence="1">Tryptophan synthase alpha chain</fullName>
        <ecNumber evidence="1">4.2.1.20</ecNumber>
    </recommendedName>
</protein>